<name>GLCTK_RAT</name>
<feature type="chain" id="PRO_0000287195" description="Glycerate kinase">
    <location>
        <begin position="1"/>
        <end position="523"/>
    </location>
</feature>
<feature type="modified residue" description="Phosphoserine" evidence="4">
    <location>
        <position position="60"/>
    </location>
</feature>
<feature type="modified residue" description="N6-acetyllysine" evidence="2">
    <location>
        <position position="200"/>
    </location>
</feature>
<keyword id="KW-0007">Acetylation</keyword>
<keyword id="KW-0067">ATP-binding</keyword>
<keyword id="KW-0963">Cytoplasm</keyword>
<keyword id="KW-0418">Kinase</keyword>
<keyword id="KW-0547">Nucleotide-binding</keyword>
<keyword id="KW-0597">Phosphoprotein</keyword>
<keyword id="KW-1185">Reference proteome</keyword>
<keyword id="KW-0808">Transferase</keyword>
<sequence>MAAALQVLPCLLRAPSRPFLWGPPVARMTSGMALAEQARQLFDSAVGAVQPGPMLQRTLSLDPSGKQLKVRDRTFQLQENLYLVGFGKAVLGMAAAADELLGQHLVQGVISVPKGIRAAVELAGKQEMLLKPHSHIQVFEGAEDNLPDRDALRAAQAIQQLAERLTADDLLLVLISGGGSALLPAPIPPVTLEEKQTLTKLLAARGATIQELNTIRKALSQLKGGGLAQAAYPAQVVSLILSDVIGDPLEVIASGPTVASTHSVQDCLHILNHYGLRAALPRSVKTVLSRADSDPHGPHTCGHVLNVIIGSNSLALAEAQRQAEVLGYHAMVLSTAMQGDVRRVAQFYGLLARVAAACLTSSTAERPLEEEAKLHQLAAELQLPDLQLEEALEAVAKAKGPVCLLAGGEPTVQLQGSGKGGRNQELALRVGAELGKQPLGPVDVLFLSGGTDGQDGPTKVAGAWVMSDLVSQASAENLDFATFLDNNDSYTFFCSFQGGTHLLHTGLTGTNVMDVHLLVFHPQ</sequence>
<reference key="1">
    <citation type="journal article" date="2004" name="Genome Res.">
        <title>The status, quality, and expansion of the NIH full-length cDNA project: the Mammalian Gene Collection (MGC).</title>
        <authorList>
            <consortium name="The MGC Project Team"/>
        </authorList>
    </citation>
    <scope>NUCLEOTIDE SEQUENCE [LARGE SCALE MRNA]</scope>
    <source>
        <tissue>Testis</tissue>
    </source>
</reference>
<reference key="2">
    <citation type="journal article" date="2012" name="Nat. Commun.">
        <title>Quantitative maps of protein phosphorylation sites across 14 different rat organs and tissues.</title>
        <authorList>
            <person name="Lundby A."/>
            <person name="Secher A."/>
            <person name="Lage K."/>
            <person name="Nordsborg N.B."/>
            <person name="Dmytriyev A."/>
            <person name="Lundby C."/>
            <person name="Olsen J.V."/>
        </authorList>
    </citation>
    <scope>PHOSPHORYLATION [LARGE SCALE ANALYSIS] AT SER-60</scope>
    <scope>IDENTIFICATION BY MASS SPECTROMETRY [LARGE SCALE ANALYSIS]</scope>
</reference>
<proteinExistence type="evidence at protein level"/>
<gene>
    <name type="primary">Glyctk</name>
</gene>
<accession>Q0VGK3</accession>
<dbReference type="EC" id="2.7.1.31"/>
<dbReference type="EMBL" id="BC105621">
    <property type="protein sequence ID" value="AAI05622.1"/>
    <property type="molecule type" value="mRNA"/>
</dbReference>
<dbReference type="RefSeq" id="NP_001102919.1">
    <property type="nucleotide sequence ID" value="NM_001109449.2"/>
</dbReference>
<dbReference type="RefSeq" id="XP_006243918.1">
    <property type="nucleotide sequence ID" value="XM_006243856.5"/>
</dbReference>
<dbReference type="RefSeq" id="XP_006243919.1">
    <property type="nucleotide sequence ID" value="XM_006243857.5"/>
</dbReference>
<dbReference type="RefSeq" id="XP_038938080.1">
    <property type="nucleotide sequence ID" value="XM_039082152.2"/>
</dbReference>
<dbReference type="SMR" id="Q0VGK3"/>
<dbReference type="FunCoup" id="Q0VGK3">
    <property type="interactions" value="208"/>
</dbReference>
<dbReference type="STRING" id="10116.ENSRNOP00000064339"/>
<dbReference type="GlyGen" id="Q0VGK3">
    <property type="glycosylation" value="1 site"/>
</dbReference>
<dbReference type="iPTMnet" id="Q0VGK3"/>
<dbReference type="PhosphoSitePlus" id="Q0VGK3"/>
<dbReference type="PaxDb" id="10116-ENSRNOP00000064339"/>
<dbReference type="Ensembl" id="ENSRNOT00000074595.2">
    <property type="protein sequence ID" value="ENSRNOP00000064339.1"/>
    <property type="gene ID" value="ENSRNOG00000046307.2"/>
</dbReference>
<dbReference type="GeneID" id="684314"/>
<dbReference type="KEGG" id="rno:684314"/>
<dbReference type="AGR" id="RGD:1591498"/>
<dbReference type="CTD" id="132158"/>
<dbReference type="RGD" id="1591498">
    <property type="gene designation" value="Glyctk"/>
</dbReference>
<dbReference type="eggNOG" id="KOG3935">
    <property type="taxonomic scope" value="Eukaryota"/>
</dbReference>
<dbReference type="GeneTree" id="ENSGT00390000014365"/>
<dbReference type="HOGENOM" id="CLU_032279_0_0_1"/>
<dbReference type="InParanoid" id="Q0VGK3"/>
<dbReference type="OMA" id="GKAAWRM"/>
<dbReference type="OrthoDB" id="44918at2759"/>
<dbReference type="PhylomeDB" id="Q0VGK3"/>
<dbReference type="Reactome" id="R-RNO-70350">
    <property type="pathway name" value="Fructose catabolism"/>
</dbReference>
<dbReference type="SABIO-RK" id="Q0VGK3"/>
<dbReference type="PRO" id="PR:Q0VGK3"/>
<dbReference type="Proteomes" id="UP000002494">
    <property type="component" value="Chromosome 8"/>
</dbReference>
<dbReference type="Bgee" id="ENSRNOG00000046307">
    <property type="expression patterns" value="Expressed in liver and 18 other cell types or tissues"/>
</dbReference>
<dbReference type="GO" id="GO:0005737">
    <property type="term" value="C:cytoplasm"/>
    <property type="evidence" value="ECO:0000250"/>
    <property type="project" value="UniProtKB"/>
</dbReference>
<dbReference type="GO" id="GO:0005829">
    <property type="term" value="C:cytosol"/>
    <property type="evidence" value="ECO:0000314"/>
    <property type="project" value="MGI"/>
</dbReference>
<dbReference type="GO" id="GO:0005524">
    <property type="term" value="F:ATP binding"/>
    <property type="evidence" value="ECO:0007669"/>
    <property type="project" value="UniProtKB-KW"/>
</dbReference>
<dbReference type="GO" id="GO:0008887">
    <property type="term" value="F:glycerate kinase activity"/>
    <property type="evidence" value="ECO:0000314"/>
    <property type="project" value="MGI"/>
</dbReference>
<dbReference type="GO" id="GO:0006001">
    <property type="term" value="P:fructose catabolic process"/>
    <property type="evidence" value="ECO:0000266"/>
    <property type="project" value="RGD"/>
</dbReference>
<dbReference type="GO" id="GO:0006468">
    <property type="term" value="P:protein phosphorylation"/>
    <property type="evidence" value="ECO:0000250"/>
    <property type="project" value="UniProtKB"/>
</dbReference>
<dbReference type="FunFam" id="3.40.50.10180:FF:000001">
    <property type="entry name" value="Glycerate kinase"/>
    <property type="match status" value="1"/>
</dbReference>
<dbReference type="Gene3D" id="3.40.50.10180">
    <property type="entry name" value="Glycerate kinase, MOFRL-like N-terminal domain"/>
    <property type="match status" value="1"/>
</dbReference>
<dbReference type="Gene3D" id="3.40.1480.10">
    <property type="entry name" value="MOFRL domain"/>
    <property type="match status" value="1"/>
</dbReference>
<dbReference type="InterPro" id="IPR037035">
    <property type="entry name" value="GK-like_C_sf"/>
</dbReference>
<dbReference type="InterPro" id="IPR038614">
    <property type="entry name" value="GK_N_sf"/>
</dbReference>
<dbReference type="InterPro" id="IPR007835">
    <property type="entry name" value="MOFRL"/>
</dbReference>
<dbReference type="InterPro" id="IPR025286">
    <property type="entry name" value="MOFRL_assoc_dom"/>
</dbReference>
<dbReference type="InterPro" id="IPR039760">
    <property type="entry name" value="MOFRL_protein"/>
</dbReference>
<dbReference type="PANTHER" id="PTHR12227">
    <property type="entry name" value="GLYCERATE KINASE"/>
    <property type="match status" value="1"/>
</dbReference>
<dbReference type="PANTHER" id="PTHR12227:SF0">
    <property type="entry name" value="GLYCERATE KINASE"/>
    <property type="match status" value="1"/>
</dbReference>
<dbReference type="Pfam" id="PF13660">
    <property type="entry name" value="DUF4147"/>
    <property type="match status" value="1"/>
</dbReference>
<dbReference type="Pfam" id="PF05161">
    <property type="entry name" value="MOFRL"/>
    <property type="match status" value="1"/>
</dbReference>
<dbReference type="SUPFAM" id="SSF82544">
    <property type="entry name" value="GckA/TtuD-like"/>
    <property type="match status" value="1"/>
</dbReference>
<comment type="catalytic activity">
    <reaction evidence="1">
        <text>(R)-glycerate + ATP = (2R)-3-phosphoglycerate + ADP + H(+)</text>
        <dbReference type="Rhea" id="RHEA:23516"/>
        <dbReference type="ChEBI" id="CHEBI:15378"/>
        <dbReference type="ChEBI" id="CHEBI:16659"/>
        <dbReference type="ChEBI" id="CHEBI:30616"/>
        <dbReference type="ChEBI" id="CHEBI:58272"/>
        <dbReference type="ChEBI" id="CHEBI:456216"/>
        <dbReference type="EC" id="2.7.1.31"/>
    </reaction>
</comment>
<comment type="subcellular location">
    <subcellularLocation>
        <location evidence="1">Cytoplasm</location>
    </subcellularLocation>
</comment>
<comment type="similarity">
    <text evidence="3">Belongs to the glycerate kinase type-2 family.</text>
</comment>
<organism>
    <name type="scientific">Rattus norvegicus</name>
    <name type="common">Rat</name>
    <dbReference type="NCBI Taxonomy" id="10116"/>
    <lineage>
        <taxon>Eukaryota</taxon>
        <taxon>Metazoa</taxon>
        <taxon>Chordata</taxon>
        <taxon>Craniata</taxon>
        <taxon>Vertebrata</taxon>
        <taxon>Euteleostomi</taxon>
        <taxon>Mammalia</taxon>
        <taxon>Eutheria</taxon>
        <taxon>Euarchontoglires</taxon>
        <taxon>Glires</taxon>
        <taxon>Rodentia</taxon>
        <taxon>Myomorpha</taxon>
        <taxon>Muroidea</taxon>
        <taxon>Muridae</taxon>
        <taxon>Murinae</taxon>
        <taxon>Rattus</taxon>
    </lineage>
</organism>
<protein>
    <recommendedName>
        <fullName>Glycerate kinase</fullName>
        <ecNumber>2.7.1.31</ecNumber>
    </recommendedName>
</protein>
<evidence type="ECO:0000250" key="1">
    <source>
        <dbReference type="UniProtKB" id="Q8IVS8"/>
    </source>
</evidence>
<evidence type="ECO:0000250" key="2">
    <source>
        <dbReference type="UniProtKB" id="Q8QZY2"/>
    </source>
</evidence>
<evidence type="ECO:0000305" key="3"/>
<evidence type="ECO:0007744" key="4">
    <source>
    </source>
</evidence>